<sequence length="152" mass="16953">MASLEDGIYRLRAVTTHNPDPGVGGEYATVEGARRPVKAEPNTPPFFEQQIWQVTRNADGQYTIKYQGLNTPFEYGFSYDELEPNAPVIAGDPKEYILQLVPSTADVYIIRAPIQRIGVDVEVGVQGNTLVYKFFPVDGSGGDRPAWRFTRE</sequence>
<protein>
    <recommendedName>
        <fullName>Clitocypin-2</fullName>
    </recommendedName>
    <alternativeName>
        <fullName>Cysteine protease inhibitor clt2</fullName>
    </alternativeName>
</protein>
<name>CLIT2_CLINE</name>
<comment type="function">
    <text evidence="1">Binds and inhibits cysteine proteinases. Inhibits most strongly papain and cathepsin L, more weakly bromelain and cathepsin B while it is completely ineffective against cathepsin H.</text>
</comment>
<comment type="subunit">
    <text evidence="1">Homodimer.</text>
</comment>
<comment type="subcellular location">
    <text evidence="1">Not secreted.</text>
</comment>
<comment type="tissue specificity">
    <text evidence="2">Expressed in all analyzed tissues, but expression was higher in the pileus and in the lower part of the stipe.</text>
</comment>
<comment type="similarity">
    <text evidence="4">Belongs to the protease inhibitor I48 family.</text>
</comment>
<reference key="1">
    <citation type="journal article" date="2006" name="Biol. Chem.">
        <title>Heterogeneity in the cysteine protease inhibitor clitocypin gene family.</title>
        <authorList>
            <person name="Sabotic J."/>
            <person name="Gaser D."/>
            <person name="Rogelj B."/>
            <person name="Gruden K."/>
            <person name="Strukelj B."/>
            <person name="Brzin J."/>
        </authorList>
    </citation>
    <scope>NUCLEOTIDE SEQUENCE [GENOMIC DNA]</scope>
    <scope>TISSUE SPECIFICITY</scope>
    <source>
        <strain>Kras2004</strain>
    </source>
</reference>
<reference key="2">
    <citation type="journal article" date="2010" name="J. Biol. Chem.">
        <title>Versatile loops in mycocypins inhibit three protease families.</title>
        <authorList>
            <person name="Renko M."/>
            <person name="Sabotic J."/>
            <person name="Mihelic M."/>
            <person name="Brzin J."/>
            <person name="Kos J."/>
            <person name="Turk D."/>
        </authorList>
    </citation>
    <scope>X-RAY CRYSTALLOGRAPHY (1.95 ANGSTROMS)</scope>
    <scope>MUTAGENESIS OF GLY-24 AND ASN-70</scope>
</reference>
<proteinExistence type="evidence at protein level"/>
<gene>
    <name type="primary">clt2</name>
</gene>
<dbReference type="EMBL" id="DQ150590">
    <property type="protein sequence ID" value="AAZ78483.1"/>
    <property type="molecule type" value="Genomic_DNA"/>
</dbReference>
<dbReference type="PDB" id="3H6R">
    <property type="method" value="X-ray"/>
    <property type="resolution" value="1.95 A"/>
    <property type="chains" value="A/B=1-152"/>
</dbReference>
<dbReference type="PDB" id="8AE4">
    <property type="method" value="X-ray"/>
    <property type="resolution" value="1.79 A"/>
    <property type="chains" value="B=1-152"/>
</dbReference>
<dbReference type="PDBsum" id="3H6R"/>
<dbReference type="PDBsum" id="8AE4"/>
<dbReference type="SMR" id="Q3Y9I4"/>
<dbReference type="MEROPS" id="I48.001"/>
<dbReference type="EvolutionaryTrace" id="Q3Y9I4"/>
<dbReference type="GO" id="GO:0004869">
    <property type="term" value="F:cysteine-type endopeptidase inhibitor activity"/>
    <property type="evidence" value="ECO:0007669"/>
    <property type="project" value="UniProtKB-KW"/>
</dbReference>
<dbReference type="Gene3D" id="2.80.10.50">
    <property type="match status" value="1"/>
</dbReference>
<dbReference type="InterPro" id="IPR019508">
    <property type="entry name" value="Prot_inh_I48_clitocypin"/>
</dbReference>
<dbReference type="Pfam" id="PF10467">
    <property type="entry name" value="Inhibitor_I48"/>
    <property type="match status" value="1"/>
</dbReference>
<evidence type="ECO:0000250" key="1">
    <source>
        <dbReference type="UniProtKB" id="Q9P4A2"/>
    </source>
</evidence>
<evidence type="ECO:0000269" key="2">
    <source>
    </source>
</evidence>
<evidence type="ECO:0000269" key="3">
    <source>
    </source>
</evidence>
<evidence type="ECO:0000305" key="4"/>
<evidence type="ECO:0007829" key="5">
    <source>
        <dbReference type="PDB" id="8AE4"/>
    </source>
</evidence>
<feature type="chain" id="PRO_0000397840" description="Clitocypin-2">
    <location>
        <begin position="1"/>
        <end position="152"/>
    </location>
</feature>
<feature type="mutagenesis site" description="20-fold lower inhibition." evidence="3">
    <original>G</original>
    <variation>A</variation>
    <location>
        <position position="24"/>
    </location>
</feature>
<feature type="mutagenesis site" description="No inhibition of asparaginyl endopeptidase." evidence="3">
    <original>N</original>
    <variation>K</variation>
    <location>
        <position position="70"/>
    </location>
</feature>
<feature type="strand" evidence="5">
    <location>
        <begin position="6"/>
        <end position="17"/>
    </location>
</feature>
<feature type="strand" evidence="5">
    <location>
        <begin position="27"/>
        <end position="29"/>
    </location>
</feature>
<feature type="strand" evidence="5">
    <location>
        <begin position="38"/>
        <end position="40"/>
    </location>
</feature>
<feature type="turn" evidence="5">
    <location>
        <begin position="44"/>
        <end position="46"/>
    </location>
</feature>
<feature type="helix" evidence="5">
    <location>
        <begin position="47"/>
        <end position="49"/>
    </location>
</feature>
<feature type="strand" evidence="5">
    <location>
        <begin position="52"/>
        <end position="56"/>
    </location>
</feature>
<feature type="strand" evidence="5">
    <location>
        <begin position="62"/>
        <end position="66"/>
    </location>
</feature>
<feature type="strand" evidence="5">
    <location>
        <begin position="69"/>
        <end position="73"/>
    </location>
</feature>
<feature type="strand" evidence="5">
    <location>
        <begin position="75"/>
        <end position="78"/>
    </location>
</feature>
<feature type="strand" evidence="5">
    <location>
        <begin position="89"/>
        <end position="92"/>
    </location>
</feature>
<feature type="strand" evidence="5">
    <location>
        <begin position="96"/>
        <end position="100"/>
    </location>
</feature>
<feature type="strand" evidence="5">
    <location>
        <begin position="105"/>
        <end position="112"/>
    </location>
</feature>
<feature type="strand" evidence="5">
    <location>
        <begin position="117"/>
        <end position="126"/>
    </location>
</feature>
<feature type="strand" evidence="5">
    <location>
        <begin position="129"/>
        <end position="136"/>
    </location>
</feature>
<feature type="strand" evidence="5">
    <location>
        <begin position="145"/>
        <end position="151"/>
    </location>
</feature>
<accession>Q3Y9I4</accession>
<organism>
    <name type="scientific">Clitocybe nebularis</name>
    <name type="common">Clouded agaric</name>
    <name type="synonym">Lepista nebularis</name>
    <dbReference type="NCBI Taxonomy" id="117024"/>
    <lineage>
        <taxon>Eukaryota</taxon>
        <taxon>Fungi</taxon>
        <taxon>Dikarya</taxon>
        <taxon>Basidiomycota</taxon>
        <taxon>Agaricomycotina</taxon>
        <taxon>Agaricomycetes</taxon>
        <taxon>Agaricomycetidae</taxon>
        <taxon>Agaricales</taxon>
        <taxon>Tricholomatineae</taxon>
        <taxon>Clitocybaceae</taxon>
        <taxon>Clitocybe</taxon>
    </lineage>
</organism>
<keyword id="KW-0002">3D-structure</keyword>
<keyword id="KW-0646">Protease inhibitor</keyword>
<keyword id="KW-0789">Thiol protease inhibitor</keyword>